<feature type="chain" id="PRO_0000444361" description="2-oxoglutarate-dependent dioxygenase lolO1">
    <location>
        <begin position="1"/>
        <end position="362"/>
    </location>
</feature>
<feature type="domain" description="Fe2OG dioxygenase" evidence="1">
    <location>
        <begin position="199"/>
        <end position="312"/>
    </location>
</feature>
<feature type="binding site" evidence="1">
    <location>
        <position position="222"/>
    </location>
    <ligand>
        <name>Fe cation</name>
        <dbReference type="ChEBI" id="CHEBI:24875"/>
    </ligand>
</feature>
<feature type="binding site" evidence="1">
    <location>
        <position position="224"/>
    </location>
    <ligand>
        <name>Fe cation</name>
        <dbReference type="ChEBI" id="CHEBI:24875"/>
    </ligand>
</feature>
<feature type="binding site" evidence="1">
    <location>
        <position position="280"/>
    </location>
    <ligand>
        <name>Fe cation</name>
        <dbReference type="ChEBI" id="CHEBI:24875"/>
    </ligand>
</feature>
<feature type="binding site" evidence="1">
    <location>
        <position position="303"/>
    </location>
    <ligand>
        <name>2-oxoglutarate</name>
        <dbReference type="ChEBI" id="CHEBI:16810"/>
    </ligand>
</feature>
<evidence type="ECO:0000255" key="1">
    <source>
        <dbReference type="PROSITE-ProRule" id="PRU00805"/>
    </source>
</evidence>
<evidence type="ECO:0000269" key="2">
    <source>
    </source>
</evidence>
<evidence type="ECO:0000269" key="3">
    <source>
    </source>
</evidence>
<evidence type="ECO:0000269" key="4">
    <source>
    </source>
</evidence>
<evidence type="ECO:0000269" key="5">
    <source>
    </source>
</evidence>
<evidence type="ECO:0000269" key="6">
    <source>
    </source>
</evidence>
<evidence type="ECO:0000269" key="7">
    <source>
    </source>
</evidence>
<evidence type="ECO:0000269" key="8">
    <source>
    </source>
</evidence>
<evidence type="ECO:0000303" key="9">
    <source>
    </source>
</evidence>
<evidence type="ECO:0000305" key="10"/>
<evidence type="ECO:0000305" key="11">
    <source>
    </source>
</evidence>
<evidence type="ECO:0000305" key="12">
    <source>
    </source>
</evidence>
<reference key="1">
    <citation type="journal article" date="2005" name="Genetics">
        <title>Gene clusters for insecticidal loline alkaloids in the grass-endophytic fungus Neotyphodium uncinatum.</title>
        <authorList>
            <person name="Spiering M.J."/>
            <person name="Moon C.D."/>
            <person name="Wilkinson H.H."/>
            <person name="Schardl C.L."/>
        </authorList>
    </citation>
    <scope>NUCLEOTIDE SEQUENCE [GENOMIC DNA]</scope>
    <scope>INDUCTION</scope>
    <scope>FUNCTION</scope>
    <source>
        <strain>CBS 102646</strain>
    </source>
</reference>
<reference key="2">
    <citation type="journal article" date="2005" name="ChemBioChem">
        <title>Biosynthetic precursors of fungal pyrrolizidines, the loline alkaloids.</title>
        <authorList>
            <person name="Blankenship J.D."/>
            <person name="Houseknecht J.B."/>
            <person name="Pal S."/>
            <person name="Bush L.P."/>
            <person name="Grossman R.B."/>
            <person name="Schardl C.L."/>
        </authorList>
    </citation>
    <scope>FUNCTION</scope>
</reference>
<reference key="3">
    <citation type="journal article" date="2006" name="ChemBioChem">
        <title>On the sequence of bond formation in loline alkaloid biosynthesis.</title>
        <authorList>
            <person name="Faulkner J.R."/>
            <person name="Hussaini S.R."/>
            <person name="Blankenship J.D."/>
            <person name="Pal S."/>
            <person name="Branan B.M."/>
            <person name="Grossman R.B."/>
            <person name="Schardl C.L."/>
        </authorList>
    </citation>
    <scope>FUNCTION</scope>
</reference>
<reference key="4">
    <citation type="journal article" date="2008" name="Fungal Genet. Biol.">
        <title>Role of the LolP cytochrome P450 monooxygenase in loline alkaloid biosynthesis.</title>
        <authorList>
            <person name="Spiering M.J."/>
            <person name="Faulkner J.R."/>
            <person name="Zhang D.X."/>
            <person name="Machado C."/>
            <person name="Grossman R.B."/>
            <person name="Schardl C.L."/>
        </authorList>
    </citation>
    <scope>FUNCTION</scope>
    <source>
        <strain>CBS 102646</strain>
    </source>
</reference>
<reference key="5">
    <citation type="journal article" date="2014" name="Phytochemistry">
        <title>Ether bridge formation in loline alkaloid biosynthesis.</title>
        <authorList>
            <person name="Pan J."/>
            <person name="Bhardwaj M."/>
            <person name="Faulkner J.R."/>
            <person name="Nagabhyru P."/>
            <person name="Charlton N.D."/>
            <person name="Higashi R.M."/>
            <person name="Miller A.F."/>
            <person name="Young C.A."/>
            <person name="Grossman R.B."/>
            <person name="Schardl C.L."/>
        </authorList>
    </citation>
    <scope>FUNCTION</scope>
</reference>
<reference key="6">
    <citation type="journal article" date="2014" name="PLoS ONE">
        <title>Enzymes from fungal and plant origin required for chemical diversification of insecticidal loline alkaloids in grass-Epichloe symbiota.</title>
        <authorList>
            <person name="Pan J."/>
            <person name="Bhardwaj M."/>
            <person name="Nagabhyru P."/>
            <person name="Grossman R.B."/>
            <person name="Schardl C.L."/>
        </authorList>
    </citation>
    <scope>FUNCTION</scope>
    <scope>BIOTECHNOLOGY</scope>
</reference>
<reference key="7">
    <citation type="journal article" date="2018" name="Biochemistry">
        <title>Installation of the ether bridge of lolines by the iron- and 2-oxoglutarate-dependent oxygenase, lolO: regio- and stereochemistry of sequential hydroxylation and oxacyclization reactions.</title>
        <authorList>
            <person name="Pan J."/>
            <person name="Bhardwaj M."/>
            <person name="Zhang B."/>
            <person name="Chang W.C."/>
            <person name="Schardl C.L."/>
            <person name="Krebs C."/>
            <person name="Grossman R.B."/>
            <person name="Bollinger J.M. Jr."/>
        </authorList>
    </citation>
    <scope>FUNCTION</scope>
</reference>
<gene>
    <name evidence="9" type="primary">lolO1</name>
    <name evidence="9" type="synonym">lolO</name>
</gene>
<protein>
    <recommendedName>
        <fullName evidence="9">2-oxoglutarate-dependent dioxygenase lolO1</fullName>
        <ecNumber evidence="11">1.14.-.-</ecNumber>
    </recommendedName>
    <alternativeName>
        <fullName evidence="9">Loline biosynthesis cluster 1 protein O</fullName>
    </alternativeName>
</protein>
<keyword id="KW-0017">Alkaloid metabolism</keyword>
<keyword id="KW-0223">Dioxygenase</keyword>
<keyword id="KW-0408">Iron</keyword>
<keyword id="KW-0479">Metal-binding</keyword>
<keyword id="KW-0560">Oxidoreductase</keyword>
<sequence length="362" mass="41354">MTVTNKPVKPANVPVMDFEAIHASVGNERKKYLRQLDEAWSHHGAIYVINHSIGTRTLEEAFAWCKKFFDLPLAVKNSVHIPPDVSKHFQGWTGTGEAISSQGVWDPDEIERLRKETPTELKEAMELQDPCGTYPPGAPDLNLVEQHLPGFLDFLKKWFAACYKQSLQNMRLVCEILGMEDLDYIGKKFEPRHMSTHSTWNYFLGQPVSQLASGSANRLNAHTDYCQFTMLFQDMVGGLELHDYEEDIYRPVPPIKGAMIVQVGDLLEKQTNGRWRSALHRVTAPSRYMYEGSAGDDDELVQRYSLVFFGHLNLDEMIEPLPGCEKQGKWSTLEWKDRMTAGQWLARRVALEYERKTAATVM</sequence>
<organism>
    <name type="scientific">Epichloe uncinata</name>
    <name type="common">Endophyte fungus</name>
    <name type="synonym">Neotyphodium uncinatum</name>
    <dbReference type="NCBI Taxonomy" id="5050"/>
    <lineage>
        <taxon>Eukaryota</taxon>
        <taxon>Fungi</taxon>
        <taxon>Dikarya</taxon>
        <taxon>Ascomycota</taxon>
        <taxon>Pezizomycotina</taxon>
        <taxon>Sordariomycetes</taxon>
        <taxon>Hypocreomycetidae</taxon>
        <taxon>Hypocreales</taxon>
        <taxon>Clavicipitaceae</taxon>
        <taxon>Epichloe</taxon>
    </lineage>
</organism>
<name>LOLO1_EPIUN</name>
<comment type="function">
    <text evidence="2 3 4 5 6 7 8">2-oxoglutarate-dependent dioxygenase; part of the gene cluster that mediates the biosynthesis of loline alkaloids, potent insecticidal agents composed of a pyrrolizidine ring system and an uncommon ether bridge linking carbons 2 and 7 (PubMed:15654104). Lolines are structurally differentiated by the various modifications of the L-amino group and include norloline, loline, N-methylloline, N-acetylloline, N-acetylnorloline, and N-formylloline (PubMed:15861432, PubMed:25531527). The first committed step is the condensation of O-acetyl-L-homoserine (derived from L-aspartic acid) and L-proline, probably catalyzed by the gamma-type pyridoxal 5'-phosphate(PLP)-dependent enzyme lolC, to give the diamino diacid, NACPP (PubMed:15861432, PubMed:16755627). Ensuing cyclization, decarboxylation, and acetylation steps yield 1-exo-acetamidopyrrolizidine (AcAP) (PubMed:24374065). LolO is required for installation of the ether bridge upon the pathway intermediate, 1-exo-acetamidopyrrolizidine (AcAP) (PubMed:29537853). In sequential 2-oxoglutarate- and O(2)-consuming steps, lolO removes hydrogens from C2 and C7 of AcAP to form both carbon-oxygen bonds in N-acetylnorloline (NANL), the precursor to all other lolines (PubMed:24374065, PubMed:29537853). The enzymes lolD, lolE, lolF and lolT have also been proposed to be involved in the ether-bridge installation (PubMed:15654104). Further processing of the exocyclic moiety of NANL by fungal N-acetamidase (LolN), methyltransferase (LolM), and cytochrome P450 (LolP) enzymes, with occasional involvement of a plant acetyltransferase, generates the other known lolines (PubMed:18655839, PubMed:25531527). LolN transforms NANL to norlonine which is monomethylated and dimethylated to respectively lonine and N-methyllonine (NML) by lolM (PubMed:25531527). LolP catalyzes hydroxylation of the methyl group in N-methylloline (NML) and further oxygenation to N-formylloline (NFL) (PubMed:18655839). A plant acetyltransferase is responsible for the acetylation of loline to form N-acetylloline (NAL) (PubMed:25531527). LolA might interact with aspartate kinase to prevent feedback inhibition of its activity by these end products and thereby promote production of l-homoserine from l-aspartate (PubMed:15654104).</text>
</comment>
<comment type="cofactor">
    <cofactor evidence="1">
        <name>Fe(2+)</name>
        <dbReference type="ChEBI" id="CHEBI:29033"/>
    </cofactor>
    <text evidence="1">Binds 1 Fe(2+) ion per subunit.</text>
</comment>
<comment type="pathway">
    <text evidence="11">Alkaloid biosynthesis.</text>
</comment>
<comment type="biotechnology">
    <text evidence="12">Loline alkaloids show broad-spectrum anti-insect activity, and different lolines may have different biological activities (PubMed:25531527). In vitro tests of NFL, NAL, NML, and semisynthetic loline derivatives with long carbon-chain acylations on the 1-amine have shown that many are effective against both fall armyworm larvae and European corn borer larvae, but the effects seem to differ depending on the modifications (PubMed:25531527). N-Formylloline reduces the weight gain of fall armyworms by deterring feeding, and does not significantly affect corn borers (PubMed:25531527). In contrast, NAL reduces the weight gain of corn borer larvae without changing larval feeding behavior, indicating that its effect is due to metabolic toxicity. N-formylloline, NAL, and NML are almost as potent as nicotine in insecticidal activity against green bugs (PubMed:25531527).</text>
</comment>
<comment type="similarity">
    <text evidence="10">Belongs to the iron/ascorbate-dependent oxidoreductase family.</text>
</comment>
<dbReference type="EC" id="1.14.-.-" evidence="11"/>
<dbReference type="EMBL" id="AY723749">
    <property type="protein sequence ID" value="AAV68705.1"/>
    <property type="molecule type" value="Genomic_DNA"/>
</dbReference>
<dbReference type="SMR" id="Q5MNI4"/>
<dbReference type="GO" id="GO:0051213">
    <property type="term" value="F:dioxygenase activity"/>
    <property type="evidence" value="ECO:0007669"/>
    <property type="project" value="UniProtKB-KW"/>
</dbReference>
<dbReference type="GO" id="GO:0046872">
    <property type="term" value="F:metal ion binding"/>
    <property type="evidence" value="ECO:0007669"/>
    <property type="project" value="UniProtKB-KW"/>
</dbReference>
<dbReference type="GO" id="GO:0009820">
    <property type="term" value="P:alkaloid metabolic process"/>
    <property type="evidence" value="ECO:0007669"/>
    <property type="project" value="UniProtKB-KW"/>
</dbReference>
<dbReference type="GO" id="GO:0044283">
    <property type="term" value="P:small molecule biosynthetic process"/>
    <property type="evidence" value="ECO:0007669"/>
    <property type="project" value="UniProtKB-ARBA"/>
</dbReference>
<dbReference type="Gene3D" id="2.60.120.330">
    <property type="entry name" value="B-lactam Antibiotic, Isopenicillin N Synthase, Chain"/>
    <property type="match status" value="1"/>
</dbReference>
<dbReference type="InterPro" id="IPR026992">
    <property type="entry name" value="DIOX_N"/>
</dbReference>
<dbReference type="InterPro" id="IPR044861">
    <property type="entry name" value="IPNS-like_FE2OG_OXY"/>
</dbReference>
<dbReference type="InterPro" id="IPR027443">
    <property type="entry name" value="IPNS-like_sf"/>
</dbReference>
<dbReference type="InterPro" id="IPR050231">
    <property type="entry name" value="Iron_ascorbate_oxido_reductase"/>
</dbReference>
<dbReference type="InterPro" id="IPR005123">
    <property type="entry name" value="Oxoglu/Fe-dep_dioxygenase_dom"/>
</dbReference>
<dbReference type="PANTHER" id="PTHR47990">
    <property type="entry name" value="2-OXOGLUTARATE (2OG) AND FE(II)-DEPENDENT OXYGENASE SUPERFAMILY PROTEIN-RELATED"/>
    <property type="match status" value="1"/>
</dbReference>
<dbReference type="Pfam" id="PF03171">
    <property type="entry name" value="2OG-FeII_Oxy"/>
    <property type="match status" value="1"/>
</dbReference>
<dbReference type="Pfam" id="PF14226">
    <property type="entry name" value="DIOX_N"/>
    <property type="match status" value="1"/>
</dbReference>
<dbReference type="SUPFAM" id="SSF51197">
    <property type="entry name" value="Clavaminate synthase-like"/>
    <property type="match status" value="1"/>
</dbReference>
<dbReference type="PROSITE" id="PS51471">
    <property type="entry name" value="FE2OG_OXY"/>
    <property type="match status" value="1"/>
</dbReference>
<proteinExistence type="evidence at transcript level"/>
<accession>Q5MNI4</accession>